<accession>Q73GT3</accession>
<comment type="function">
    <text evidence="1">Cell wall formation. Catalyzes the addition of glutamate to the nucleotide precursor UDP-N-acetylmuramoyl-L-alanine (UMA).</text>
</comment>
<comment type="catalytic activity">
    <reaction evidence="1">
        <text>UDP-N-acetyl-alpha-D-muramoyl-L-alanine + D-glutamate + ATP = UDP-N-acetyl-alpha-D-muramoyl-L-alanyl-D-glutamate + ADP + phosphate + H(+)</text>
        <dbReference type="Rhea" id="RHEA:16429"/>
        <dbReference type="ChEBI" id="CHEBI:15378"/>
        <dbReference type="ChEBI" id="CHEBI:29986"/>
        <dbReference type="ChEBI" id="CHEBI:30616"/>
        <dbReference type="ChEBI" id="CHEBI:43474"/>
        <dbReference type="ChEBI" id="CHEBI:83898"/>
        <dbReference type="ChEBI" id="CHEBI:83900"/>
        <dbReference type="ChEBI" id="CHEBI:456216"/>
        <dbReference type="EC" id="6.3.2.9"/>
    </reaction>
</comment>
<comment type="pathway">
    <text evidence="1">Cell wall biogenesis; peptidoglycan biosynthesis.</text>
</comment>
<comment type="subcellular location">
    <subcellularLocation>
        <location evidence="1">Cytoplasm</location>
    </subcellularLocation>
</comment>
<comment type="similarity">
    <text evidence="1">Belongs to the MurCDEF family.</text>
</comment>
<name>MURD_WOLPM</name>
<evidence type="ECO:0000255" key="1">
    <source>
        <dbReference type="HAMAP-Rule" id="MF_00639"/>
    </source>
</evidence>
<dbReference type="EC" id="6.3.2.9" evidence="1"/>
<dbReference type="EMBL" id="AE017196">
    <property type="protein sequence ID" value="AAS14533.1"/>
    <property type="molecule type" value="Genomic_DNA"/>
</dbReference>
<dbReference type="SMR" id="Q73GT3"/>
<dbReference type="EnsemblBacteria" id="AAS14533">
    <property type="protein sequence ID" value="AAS14533"/>
    <property type="gene ID" value="WD_0849"/>
</dbReference>
<dbReference type="KEGG" id="wol:WD_0849"/>
<dbReference type="eggNOG" id="COG0771">
    <property type="taxonomic scope" value="Bacteria"/>
</dbReference>
<dbReference type="UniPathway" id="UPA00219"/>
<dbReference type="Proteomes" id="UP000008215">
    <property type="component" value="Chromosome"/>
</dbReference>
<dbReference type="GO" id="GO:0005737">
    <property type="term" value="C:cytoplasm"/>
    <property type="evidence" value="ECO:0007669"/>
    <property type="project" value="UniProtKB-SubCell"/>
</dbReference>
<dbReference type="GO" id="GO:0005524">
    <property type="term" value="F:ATP binding"/>
    <property type="evidence" value="ECO:0007669"/>
    <property type="project" value="UniProtKB-UniRule"/>
</dbReference>
<dbReference type="GO" id="GO:0004326">
    <property type="term" value="F:tetrahydrofolylpolyglutamate synthase activity"/>
    <property type="evidence" value="ECO:0007669"/>
    <property type="project" value="InterPro"/>
</dbReference>
<dbReference type="GO" id="GO:0008764">
    <property type="term" value="F:UDP-N-acetylmuramoylalanine-D-glutamate ligase activity"/>
    <property type="evidence" value="ECO:0007669"/>
    <property type="project" value="UniProtKB-UniRule"/>
</dbReference>
<dbReference type="GO" id="GO:0051301">
    <property type="term" value="P:cell division"/>
    <property type="evidence" value="ECO:0007669"/>
    <property type="project" value="UniProtKB-KW"/>
</dbReference>
<dbReference type="GO" id="GO:0071555">
    <property type="term" value="P:cell wall organization"/>
    <property type="evidence" value="ECO:0007669"/>
    <property type="project" value="UniProtKB-KW"/>
</dbReference>
<dbReference type="GO" id="GO:0009252">
    <property type="term" value="P:peptidoglycan biosynthetic process"/>
    <property type="evidence" value="ECO:0007669"/>
    <property type="project" value="UniProtKB-UniRule"/>
</dbReference>
<dbReference type="GO" id="GO:0008360">
    <property type="term" value="P:regulation of cell shape"/>
    <property type="evidence" value="ECO:0007669"/>
    <property type="project" value="UniProtKB-KW"/>
</dbReference>
<dbReference type="Gene3D" id="3.90.190.20">
    <property type="entry name" value="Mur ligase, C-terminal domain"/>
    <property type="match status" value="1"/>
</dbReference>
<dbReference type="Gene3D" id="3.40.1190.10">
    <property type="entry name" value="Mur-like, catalytic domain"/>
    <property type="match status" value="1"/>
</dbReference>
<dbReference type="Gene3D" id="3.40.50.720">
    <property type="entry name" value="NAD(P)-binding Rossmann-like Domain"/>
    <property type="match status" value="1"/>
</dbReference>
<dbReference type="HAMAP" id="MF_00639">
    <property type="entry name" value="MurD"/>
    <property type="match status" value="1"/>
</dbReference>
<dbReference type="InterPro" id="IPR018109">
    <property type="entry name" value="Folylpolyglutamate_synth_CS"/>
</dbReference>
<dbReference type="InterPro" id="IPR036565">
    <property type="entry name" value="Mur-like_cat_sf"/>
</dbReference>
<dbReference type="InterPro" id="IPR036615">
    <property type="entry name" value="Mur_ligase_C_dom_sf"/>
</dbReference>
<dbReference type="InterPro" id="IPR013221">
    <property type="entry name" value="Mur_ligase_cen"/>
</dbReference>
<dbReference type="InterPro" id="IPR005762">
    <property type="entry name" value="MurD"/>
</dbReference>
<dbReference type="InterPro" id="IPR036291">
    <property type="entry name" value="NAD(P)-bd_dom_sf"/>
</dbReference>
<dbReference type="PANTHER" id="PTHR43692">
    <property type="entry name" value="UDP-N-ACETYLMURAMOYLALANINE--D-GLUTAMATE LIGASE"/>
    <property type="match status" value="1"/>
</dbReference>
<dbReference type="PANTHER" id="PTHR43692:SF1">
    <property type="entry name" value="UDP-N-ACETYLMURAMOYLALANINE--D-GLUTAMATE LIGASE"/>
    <property type="match status" value="1"/>
</dbReference>
<dbReference type="Pfam" id="PF08245">
    <property type="entry name" value="Mur_ligase_M"/>
    <property type="match status" value="1"/>
</dbReference>
<dbReference type="Pfam" id="PF21799">
    <property type="entry name" value="MurD-like_N"/>
    <property type="match status" value="1"/>
</dbReference>
<dbReference type="SUPFAM" id="SSF53623">
    <property type="entry name" value="MurD-like peptide ligases, catalytic domain"/>
    <property type="match status" value="1"/>
</dbReference>
<dbReference type="SUPFAM" id="SSF53244">
    <property type="entry name" value="MurD-like peptide ligases, peptide-binding domain"/>
    <property type="match status" value="1"/>
</dbReference>
<dbReference type="SUPFAM" id="SSF51735">
    <property type="entry name" value="NAD(P)-binding Rossmann-fold domains"/>
    <property type="match status" value="1"/>
</dbReference>
<reference key="1">
    <citation type="journal article" date="2004" name="PLoS Biol.">
        <title>Phylogenomics of the reproductive parasite Wolbachia pipientis wMel: a streamlined genome overrun by mobile genetic elements.</title>
        <authorList>
            <person name="Wu M."/>
            <person name="Sun L.V."/>
            <person name="Vamathevan J.J."/>
            <person name="Riegler M."/>
            <person name="DeBoy R.T."/>
            <person name="Brownlie J.C."/>
            <person name="McGraw E.A."/>
            <person name="Martin W."/>
            <person name="Esser C."/>
            <person name="Ahmadinejad N."/>
            <person name="Wiegand C."/>
            <person name="Madupu R."/>
            <person name="Beanan M.J."/>
            <person name="Brinkac L.M."/>
            <person name="Daugherty S.C."/>
            <person name="Durkin A.S."/>
            <person name="Kolonay J.F."/>
            <person name="Nelson W.C."/>
            <person name="Mohamoud Y."/>
            <person name="Lee P."/>
            <person name="Berry K.J."/>
            <person name="Young M.B."/>
            <person name="Utterback T.R."/>
            <person name="Weidman J.F."/>
            <person name="Nierman W.C."/>
            <person name="Paulsen I.T."/>
            <person name="Nelson K.E."/>
            <person name="Tettelin H."/>
            <person name="O'Neill S.L."/>
            <person name="Eisen J.A."/>
        </authorList>
    </citation>
    <scope>NUCLEOTIDE SEQUENCE [LARGE SCALE GENOMIC DNA]</scope>
</reference>
<proteinExistence type="inferred from homology"/>
<keyword id="KW-0067">ATP-binding</keyword>
<keyword id="KW-0131">Cell cycle</keyword>
<keyword id="KW-0132">Cell division</keyword>
<keyword id="KW-0133">Cell shape</keyword>
<keyword id="KW-0961">Cell wall biogenesis/degradation</keyword>
<keyword id="KW-0963">Cytoplasm</keyword>
<keyword id="KW-0436">Ligase</keyword>
<keyword id="KW-0547">Nucleotide-binding</keyword>
<keyword id="KW-0573">Peptidoglycan synthesis</keyword>
<protein>
    <recommendedName>
        <fullName evidence="1">UDP-N-acetylmuramoylalanine--D-glutamate ligase</fullName>
        <ecNumber evidence="1">6.3.2.9</ecNumber>
    </recommendedName>
    <alternativeName>
        <fullName evidence="1">D-glutamic acid-adding enzyme</fullName>
    </alternativeName>
    <alternativeName>
        <fullName evidence="1">UDP-N-acetylmuramoyl-L-alanyl-D-glutamate synthetase</fullName>
    </alternativeName>
</protein>
<organism>
    <name type="scientific">Wolbachia pipientis wMel</name>
    <dbReference type="NCBI Taxonomy" id="163164"/>
    <lineage>
        <taxon>Bacteria</taxon>
        <taxon>Pseudomonadati</taxon>
        <taxon>Pseudomonadota</taxon>
        <taxon>Alphaproteobacteria</taxon>
        <taxon>Rickettsiales</taxon>
        <taxon>Anaplasmataceae</taxon>
        <taxon>Wolbachieae</taxon>
        <taxon>Wolbachia</taxon>
    </lineage>
</organism>
<feature type="chain" id="PRO_0000109125" description="UDP-N-acetylmuramoylalanine--D-glutamate ligase">
    <location>
        <begin position="1"/>
        <end position="509"/>
    </location>
</feature>
<feature type="binding site" evidence="1">
    <location>
        <begin position="116"/>
        <end position="122"/>
    </location>
    <ligand>
        <name>ATP</name>
        <dbReference type="ChEBI" id="CHEBI:30616"/>
    </ligand>
</feature>
<gene>
    <name evidence="1" type="primary">murD</name>
    <name type="ordered locus">WD_0849</name>
</gene>
<sequence length="509" mass="56517">MQLNKYKNQNVAVFGLGKTGLSAINALTKSGARIYAWDDHEEQIANAKMMYKKCNFIHPKEYNWHEISALVLSPGVPTEPHWIVKLARRFDCKIKSDIELFLEAKTTNQKVIGVTGTNGKSTTTSLIGHILKSAGKKVAIGGNLGVPVLDLERDAEIYVIELSSFQLELMNEINVDISALLNITPDHIDRHGSMENYIATKLKLINGSEVAVIGCDNEITADIFNKFTGDKIPISVTYSPMSFQCVTLESRKEKPLPTTQMTEGGARDLISLAGNNLLDYSEQITGIDRNYLDPSVSYLDDKRGTGIQKISLKLENHSLSVSDVKINLISNAENIAATYAVCKVLGVDSNTIINGIKSFSGLRHRNELLGKIRNVFFVNDSKATNAKSSEKAILSYENINWIAGGRSKKGGIESLSKHFTRVRKAFLIGESTEAFANVMENKVDYVKCCNLEDAFRLAFEEALNSAEEVTILLSPACASFDQWKNFEERGEAFCRMFENLRYNHTCCLV</sequence>